<evidence type="ECO:0000250" key="1">
    <source>
        <dbReference type="UniProtKB" id="Q5T3F8"/>
    </source>
</evidence>
<evidence type="ECO:0000255" key="2"/>
<evidence type="ECO:0000255" key="3">
    <source>
        <dbReference type="PROSITE-ProRule" id="PRU00498"/>
    </source>
</evidence>
<evidence type="ECO:0000256" key="4">
    <source>
        <dbReference type="SAM" id="MobiDB-lite"/>
    </source>
</evidence>
<evidence type="ECO:0000269" key="5">
    <source>
    </source>
</evidence>
<evidence type="ECO:0000269" key="6">
    <source>
    </source>
</evidence>
<evidence type="ECO:0000269" key="7">
    <source>
    </source>
</evidence>
<evidence type="ECO:0000269" key="8">
    <source>
    </source>
</evidence>
<evidence type="ECO:0000269" key="9">
    <source>
    </source>
</evidence>
<evidence type="ECO:0000269" key="10">
    <source>
    </source>
</evidence>
<evidence type="ECO:0000269" key="11">
    <source>
    </source>
</evidence>
<evidence type="ECO:0000269" key="12">
    <source>
    </source>
</evidence>
<evidence type="ECO:0000269" key="13">
    <source>
    </source>
</evidence>
<evidence type="ECO:0000269" key="14">
    <source>
    </source>
</evidence>
<evidence type="ECO:0000269" key="15">
    <source>
    </source>
</evidence>
<evidence type="ECO:0000269" key="16">
    <source>
    </source>
</evidence>
<evidence type="ECO:0000269" key="17">
    <source>
    </source>
</evidence>
<evidence type="ECO:0000269" key="18">
    <source>
    </source>
</evidence>
<evidence type="ECO:0000303" key="19">
    <source>
    </source>
</evidence>
<evidence type="ECO:0000303" key="20">
    <source>
    </source>
</evidence>
<evidence type="ECO:0000305" key="21"/>
<evidence type="ECO:0000305" key="22">
    <source>
    </source>
</evidence>
<evidence type="ECO:0000312" key="23">
    <source>
        <dbReference type="MGI" id="MGI:2387609"/>
    </source>
</evidence>
<evidence type="ECO:0007744" key="24">
    <source>
        <dbReference type="PDB" id="8WG3"/>
    </source>
</evidence>
<evidence type="ECO:0007744" key="25">
    <source>
        <dbReference type="PDB" id="8WG4"/>
    </source>
</evidence>
<evidence type="ECO:0007744" key="26">
    <source>
    </source>
</evidence>
<evidence type="ECO:0007744" key="27">
    <source>
    </source>
</evidence>
<comment type="function">
    <text evidence="5 6 7 8 12 13 14 15 16 17 18">Mechanosensitive cation channel with low conductance and high activation threshold (PubMed:27045885, PubMed:30382938, PubMed:31243992, PubMed:37543036, PubMed:37945568, PubMed:38127458). Osmosensitive cation channel preferentially activated by hypotonic stress (PubMed:27045885). Also acts as a phospholipid scramblase in response to changes in membrane structure: upon changes in membrane curvature and thickness, alters its conformation and translocates phospholipids, such as phosphatidylcholine and sphingomyelin, thereby controlling plasma membrane lipid distribution (PubMed:39217145, PubMed:39424995). Forms a heterodimer with SLC19A2, which mediates phospholipid scramblase activity following Ca(2+) stimulation (PubMed:39217145). Expressed in excitatory neurons of the subfornical organ and functions as a thirst receptor that mediates neuronal response to hyperosmolality to drive thirst and drinking behavior (PubMed:38172113). Facilitates intestinal motility by promoting proliferation of intestinal stem cells (PubMed:39513891). Essential for the baby's first breath and respiration throughout life (PubMed:38127458). Upon lung inflation conducts cation currents in alveolar type 1 and 2 cells triggering lamellar body exocytosis and surfactant secretion into airspace (PubMed:38127458). Acts as an osmosensor in cochlear outer hair cells (OHCs) where it mediates calcium influx and regulatory volume decrease response (PubMed:32375046). Required for the maintenance of OHC morphology, OHC survival and normal hearing (PubMed:32375046).</text>
</comment>
<comment type="function">
    <molecule>Isoform 2</molecule>
    <text evidence="9">Brain-specific osmosensitive calcium channel isoform.</text>
</comment>
<comment type="catalytic activity">
    <reaction evidence="7 8 13">
        <text>Ca(2+)(in) = Ca(2+)(out)</text>
        <dbReference type="Rhea" id="RHEA:29671"/>
        <dbReference type="ChEBI" id="CHEBI:29108"/>
    </reaction>
</comment>
<comment type="catalytic activity">
    <reaction evidence="8">
        <text>Mg(2+)(in) = Mg(2+)(out)</text>
        <dbReference type="Rhea" id="RHEA:29827"/>
        <dbReference type="ChEBI" id="CHEBI:18420"/>
    </reaction>
</comment>
<comment type="catalytic activity">
    <reaction evidence="8">
        <text>K(+)(in) = K(+)(out)</text>
        <dbReference type="Rhea" id="RHEA:29463"/>
        <dbReference type="ChEBI" id="CHEBI:29103"/>
    </reaction>
</comment>
<comment type="catalytic activity">
    <reaction evidence="8">
        <text>Na(+)(in) = Na(+)(out)</text>
        <dbReference type="Rhea" id="RHEA:34963"/>
        <dbReference type="ChEBI" id="CHEBI:29101"/>
    </reaction>
</comment>
<comment type="catalytic activity">
    <reaction evidence="8">
        <text>Cs(+)(in) = Cs(+)(out)</text>
        <dbReference type="Rhea" id="RHEA:78555"/>
        <dbReference type="ChEBI" id="CHEBI:49547"/>
    </reaction>
</comment>
<comment type="catalytic activity">
    <reaction evidence="17">
        <text>a 1,2-diacyl-sn-glycero-3-phosphocholine(in) = a 1,2-diacyl-sn-glycero-3-phosphocholine(out)</text>
        <dbReference type="Rhea" id="RHEA:38571"/>
        <dbReference type="ChEBI" id="CHEBI:57643"/>
    </reaction>
</comment>
<comment type="catalytic activity">
    <reaction evidence="17">
        <text>a sphingomyelin(in) = a sphingomyelin(out)</text>
        <dbReference type="Rhea" id="RHEA:39727"/>
        <dbReference type="ChEBI" id="CHEBI:17636"/>
    </reaction>
</comment>
<comment type="catalytic activity">
    <molecule>Isoform 2</molecule>
    <reaction evidence="9">
        <text>Ca(2+)(in) = Ca(2+)(out)</text>
        <dbReference type="Rhea" id="RHEA:29671"/>
        <dbReference type="ChEBI" id="CHEBI:29108"/>
    </reaction>
</comment>
<comment type="subunit">
    <text evidence="11 12 16">Monomer (PubMed:37402734, PubMed:37543036). Interacts with SLC19A2; interaction is required for the phospholipid scramblase activity (PubMed:39217145).</text>
</comment>
<comment type="subcellular location">
    <subcellularLocation>
        <location evidence="5 7 8 10 12 17">Cell membrane</location>
        <topology evidence="17">Multi-pass membrane protein</topology>
    </subcellularLocation>
    <subcellularLocation>
        <location evidence="10">Endoplasmic reticulum membrane</location>
        <topology evidence="17">Multi-pass membrane protein</topology>
    </subcellularLocation>
    <subcellularLocation>
        <location evidence="17">Lysosome membrane</location>
        <topology evidence="17">Multi-pass membrane protein</topology>
    </subcellularLocation>
    <subcellularLocation>
        <location evidence="1">Early endosome membrane</location>
        <topology evidence="17">Multi-pass membrane protein</topology>
    </subcellularLocation>
    <text evidence="7 14">Colocalizes with cortical F-actin (PubMed:31243992). Probably localizes at lamellar body membrane in alveolar type 2 cells (PubMed:38127458).</text>
</comment>
<comment type="subcellular location">
    <molecule>Isoform 2</molecule>
    <subcellularLocation>
        <location evidence="10">Cell membrane</location>
        <topology evidence="2">Multi-pass membrane protein</topology>
    </subcellularLocation>
    <text evidence="10">Isoform 2 localizes exclusively to the plasma membrane.</text>
</comment>
<comment type="alternative products">
    <event type="alternative splicing"/>
    <isoform>
        <id>Q3TWI9-1</id>
        <name>1</name>
        <sequence type="displayed"/>
    </isoform>
    <isoform>
        <id>Q3TWI9-2</id>
        <name>2</name>
        <sequence type="described" ref="VSP_062540"/>
    </isoform>
</comment>
<comment type="tissue specificity">
    <text evidence="8 15 18">Expressed in cochlear hair cells (at protein level) (PubMed:32375046). Highly expressed in the subfornical organ of the brain (PubMed:38172113). Expressed in small intestine (PubMed:39513891).</text>
</comment>
<comment type="tissue specificity">
    <molecule>Isoform 2</molecule>
    <text evidence="9">Brain-specific.</text>
</comment>
<comment type="PTM">
    <text evidence="17">Palmitoylation is required for localization to the plasma membrane and stability.</text>
</comment>
<comment type="RNA editing">
    <molecule>Isoform 2</molecule>
    <location>
        <position position="606" evidence="9"/>
    </location>
    <text evidence="9">RNA editing is mediated by Adarb1 and only takes place in the brain (PubMed:33100268). It affects the osmosensitive calcium channel activity (PubMed:33100268).</text>
</comment>
<comment type="disruption phenotype">
    <text evidence="8 14 15 18">Most mice die at birth due to impaired alveolar expansion and respiratory failure (PubMed:38127458). Viable knockout mice generated in a mixed background of C57BL/6N and FVB/N show severe necroptosis of outer hair cells (OHCs) in the inner ear and progressive hearing loss (PubMed:32375046). OHCs also fail to exhibit regulatory volume decrease and calcium influx under hypotonic stress (PubMed:32375046). Conditional deletion in excitatory neurons of the subfornical organ leads to impaired hyperosmolarity-induced drinking behavior (PubMed:38172113). Conditional deletion in intestinal stem cells impairs intestinal motility and digestion, and decreases the proliferation of intestinal stem cells (PubMed:39513891).</text>
</comment>
<comment type="similarity">
    <text evidence="21">Belongs to the CSC1 (TC 1.A.17) family.</text>
</comment>
<comment type="sequence caution" evidence="21">
    <conflict type="erroneous initiation">
        <sequence resource="EMBL-CDS" id="AAH57136"/>
    </conflict>
    <text>Truncated N-terminus.</text>
</comment>
<comment type="sequence caution" evidence="21">
    <conflict type="erroneous initiation">
        <sequence resource="EMBL-CDS" id="AAH59283"/>
    </conflict>
    <text>Extended N-terminus.</text>
</comment>
<sequence>MLPFLLATLGTAALNSSNPKDYCYSARIRSTVLQGLPFGGVPTVLALDFMCFLALLFLFSILRKVAWDYGRLALVTDADRLRRQERERVEQEYVASAMHGDSHDRYERLTSVSSSVDFDQRDNGFCSWLTAIFRIKDDEIRDKCGGDAVHYLSFQRHIIGLLVVVGVLSVGIVLPVNFSGDLLENNAYSFGRTTIANLKSGNNLLWLHTSFAFLYLLLTVYSMRRHTSKMRYKEDDLVKRTLFINGISKYAESEKIKKHFEEAYPNCTVLEARPCYNVARLMFLDAERKKAERGKLYFTNLQSKENVPAMINPKPCGHLCCCVVRGCEQVEAIEYYTKLEQRLKEDYRREKEKVNEKPLGMAFVTFHNETITAIILKDFNVCKCQGCTCRGEPRASSCSEALHISNWTVTYAPDPQNIYWEHLSIRGFIWWLRCLVINVVLFILLFFLTTPAIIITTMDKFNVTKPVEYLNNPIITQFFPTLLLWCFSALLPTIVYYSAFFEAHWTRSGENRTTMHKCYTFLIFMVLLLPSLGLSSLDLFFRWLFDKKFLAEAAIRFECVFLPDNGAFFVNYVIASAFIGNAMDLLRIPGLLMYMIRLCLARSAAERRNVKRHQAYEFQFGAAYAWMMCVFTVVMTYSITCPIIVPFGLMYMLLKHLVDRYNLYYAYLPAKLDKKIHSGAVNQVVAAPILCLFWLLFFSTMRTGFLAPTSMFTFVVLVITIVICLCHVCFGHFKYLSAHNYKIEHTETDAVSSRSNGRPPTAGAVPKSAKYIAQVLQDSEGDGDGDGAPGSSGDEPPSSSSQDEELLMPPDGLTDTDFQSCEDSLIENEIHQ</sequence>
<keyword id="KW-0002">3D-structure</keyword>
<keyword id="KW-0025">Alternative splicing</keyword>
<keyword id="KW-0106">Calcium</keyword>
<keyword id="KW-1003">Cell membrane</keyword>
<keyword id="KW-0256">Endoplasmic reticulum</keyword>
<keyword id="KW-0967">Endosome</keyword>
<keyword id="KW-0268">Exocytosis</keyword>
<keyword id="KW-0325">Glycoprotein</keyword>
<keyword id="KW-1009">Hearing</keyword>
<keyword id="KW-0407">Ion channel</keyword>
<keyword id="KW-0406">Ion transport</keyword>
<keyword id="KW-0449">Lipoprotein</keyword>
<keyword id="KW-0458">Lysosome</keyword>
<keyword id="KW-0472">Membrane</keyword>
<keyword id="KW-0564">Palmitate</keyword>
<keyword id="KW-0597">Phosphoprotein</keyword>
<keyword id="KW-1185">Reference proteome</keyword>
<keyword id="KW-0812">Transmembrane</keyword>
<keyword id="KW-1133">Transmembrane helix</keyword>
<keyword id="KW-0813">Transport</keyword>
<dbReference type="EMBL" id="AK090200">
    <property type="protein sequence ID" value="BAC41131.1"/>
    <property type="molecule type" value="mRNA"/>
</dbReference>
<dbReference type="EMBL" id="AK159673">
    <property type="protein sequence ID" value="BAE35277.1"/>
    <property type="molecule type" value="mRNA"/>
</dbReference>
<dbReference type="EMBL" id="BC026370">
    <property type="protein sequence ID" value="AAH26370.1"/>
    <property type="molecule type" value="mRNA"/>
</dbReference>
<dbReference type="EMBL" id="BC057136">
    <property type="protein sequence ID" value="AAH57136.1"/>
    <property type="status" value="ALT_INIT"/>
    <property type="molecule type" value="mRNA"/>
</dbReference>
<dbReference type="EMBL" id="BC059283">
    <property type="protein sequence ID" value="AAH59283.1"/>
    <property type="status" value="ALT_INIT"/>
    <property type="molecule type" value="mRNA"/>
</dbReference>
<dbReference type="CCDS" id="CCDS28814.1"/>
<dbReference type="RefSeq" id="NP_001400551.1">
    <property type="nucleotide sequence ID" value="NM_001413622.1"/>
</dbReference>
<dbReference type="RefSeq" id="NP_001400552.1">
    <property type="nucleotide sequence ID" value="NM_001413623.1"/>
</dbReference>
<dbReference type="RefSeq" id="NP_937810.2">
    <property type="nucleotide sequence ID" value="NM_198167.4"/>
</dbReference>
<dbReference type="RefSeq" id="XP_006524199.1">
    <property type="nucleotide sequence ID" value="XM_006524136.1"/>
</dbReference>
<dbReference type="RefSeq" id="XP_006524200.1">
    <property type="nucleotide sequence ID" value="XM_006524137.2"/>
</dbReference>
<dbReference type="PDB" id="8WG3">
    <property type="method" value="EM"/>
    <property type="resolution" value="3.40 A"/>
    <property type="chains" value="A=1-832"/>
</dbReference>
<dbReference type="PDB" id="8WG4">
    <property type="method" value="EM"/>
    <property type="resolution" value="3.50 A"/>
    <property type="chains" value="A=1-832"/>
</dbReference>
<dbReference type="PDBsum" id="8WG3"/>
<dbReference type="PDBsum" id="8WG4"/>
<dbReference type="SMR" id="Q3TWI9"/>
<dbReference type="BioGRID" id="230322">
    <property type="interactions" value="4"/>
</dbReference>
<dbReference type="FunCoup" id="Q3TWI9">
    <property type="interactions" value="134"/>
</dbReference>
<dbReference type="IntAct" id="Q3TWI9">
    <property type="interactions" value="1"/>
</dbReference>
<dbReference type="STRING" id="10090.ENSMUSP00000109151"/>
<dbReference type="GlyGen" id="Q3TWI9">
    <property type="glycosylation" value="3 sites, 1 N-linked glycan (2 sites)"/>
</dbReference>
<dbReference type="iPTMnet" id="Q3TWI9"/>
<dbReference type="PhosphoSitePlus" id="Q3TWI9"/>
<dbReference type="SwissPalm" id="Q3TWI9"/>
<dbReference type="jPOST" id="Q3TWI9"/>
<dbReference type="PaxDb" id="10090-ENSMUSP00000109151"/>
<dbReference type="PeptideAtlas" id="Q3TWI9"/>
<dbReference type="ProteomicsDB" id="285341"/>
<dbReference type="Pumba" id="Q3TWI9"/>
<dbReference type="Antibodypedia" id="30591">
    <property type="antibodies" value="35 antibodies from 13 providers"/>
</dbReference>
<dbReference type="DNASU" id="224807"/>
<dbReference type="Ensembl" id="ENSMUST00000113523.9">
    <property type="protein sequence ID" value="ENSMUSP00000109151.3"/>
    <property type="gene ID" value="ENSMUSG00000036026.16"/>
</dbReference>
<dbReference type="GeneID" id="224807"/>
<dbReference type="KEGG" id="mmu:224807"/>
<dbReference type="UCSC" id="uc012auh.1">
    <property type="organism name" value="mouse"/>
</dbReference>
<dbReference type="AGR" id="MGI:2387609"/>
<dbReference type="CTD" id="55362"/>
<dbReference type="MGI" id="MGI:2387609">
    <property type="gene designation" value="Tmem63b"/>
</dbReference>
<dbReference type="VEuPathDB" id="HostDB:ENSMUSG00000036026"/>
<dbReference type="eggNOG" id="KOG1134">
    <property type="taxonomic scope" value="Eukaryota"/>
</dbReference>
<dbReference type="GeneTree" id="ENSGT00940000157084"/>
<dbReference type="HOGENOM" id="CLU_015647_0_0_1"/>
<dbReference type="InParanoid" id="Q3TWI9"/>
<dbReference type="OMA" id="CSCKKEN"/>
<dbReference type="OrthoDB" id="1689567at2759"/>
<dbReference type="PhylomeDB" id="Q3TWI9"/>
<dbReference type="TreeFam" id="TF324300"/>
<dbReference type="BioGRID-ORCS" id="224807">
    <property type="hits" value="2 hits in 78 CRISPR screens"/>
</dbReference>
<dbReference type="CD-CODE" id="CE726F99">
    <property type="entry name" value="Postsynaptic density"/>
</dbReference>
<dbReference type="ChiTaRS" id="Tmem63b">
    <property type="organism name" value="mouse"/>
</dbReference>
<dbReference type="PRO" id="PR:Q3TWI9"/>
<dbReference type="Proteomes" id="UP000000589">
    <property type="component" value="Chromosome 17"/>
</dbReference>
<dbReference type="RNAct" id="Q3TWI9">
    <property type="molecule type" value="protein"/>
</dbReference>
<dbReference type="Bgee" id="ENSMUSG00000036026">
    <property type="expression patterns" value="Expressed in retinal neural layer and 248 other cell types or tissues"/>
</dbReference>
<dbReference type="ExpressionAtlas" id="Q3TWI9">
    <property type="expression patterns" value="baseline and differential"/>
</dbReference>
<dbReference type="GO" id="GO:0015629">
    <property type="term" value="C:actin cytoskeleton"/>
    <property type="evidence" value="ECO:0007669"/>
    <property type="project" value="Ensembl"/>
</dbReference>
<dbReference type="GO" id="GO:0097233">
    <property type="term" value="C:alveolar lamellar body membrane"/>
    <property type="evidence" value="ECO:0007669"/>
    <property type="project" value="Ensembl"/>
</dbReference>
<dbReference type="GO" id="GO:0031901">
    <property type="term" value="C:early endosome membrane"/>
    <property type="evidence" value="ECO:0000250"/>
    <property type="project" value="UniProtKB"/>
</dbReference>
<dbReference type="GO" id="GO:0005789">
    <property type="term" value="C:endoplasmic reticulum membrane"/>
    <property type="evidence" value="ECO:0000314"/>
    <property type="project" value="UniProtKB"/>
</dbReference>
<dbReference type="GO" id="GO:0005765">
    <property type="term" value="C:lysosomal membrane"/>
    <property type="evidence" value="ECO:0000314"/>
    <property type="project" value="UniProtKB"/>
</dbReference>
<dbReference type="GO" id="GO:0005886">
    <property type="term" value="C:plasma membrane"/>
    <property type="evidence" value="ECO:0000314"/>
    <property type="project" value="UniProtKB"/>
</dbReference>
<dbReference type="GO" id="GO:0005227">
    <property type="term" value="F:calcium-activated cation channel activity"/>
    <property type="evidence" value="ECO:0000314"/>
    <property type="project" value="UniProtKB"/>
</dbReference>
<dbReference type="GO" id="GO:0140135">
    <property type="term" value="F:mechanosensitive monoatomic cation channel activity"/>
    <property type="evidence" value="ECO:0000250"/>
    <property type="project" value="UniProtKB"/>
</dbReference>
<dbReference type="GO" id="GO:0008381">
    <property type="term" value="F:mechanosensitive monoatomic ion channel activity"/>
    <property type="evidence" value="ECO:0000314"/>
    <property type="project" value="UniProtKB"/>
</dbReference>
<dbReference type="GO" id="GO:1990760">
    <property type="term" value="F:osmolarity-sensing monoatomic cation channel activity"/>
    <property type="evidence" value="ECO:0000314"/>
    <property type="project" value="UniProtKB"/>
</dbReference>
<dbReference type="GO" id="GO:0120019">
    <property type="term" value="F:phosphatidylcholine transfer activity"/>
    <property type="evidence" value="ECO:0000314"/>
    <property type="project" value="UniProtKB"/>
</dbReference>
<dbReference type="GO" id="GO:0017128">
    <property type="term" value="F:phospholipid scramblase activity"/>
    <property type="evidence" value="ECO:0000314"/>
    <property type="project" value="UniProtKB"/>
</dbReference>
<dbReference type="GO" id="GO:0140338">
    <property type="term" value="F:sphingomyelin transfer activity"/>
    <property type="evidence" value="ECO:0000314"/>
    <property type="project" value="UniProtKB"/>
</dbReference>
<dbReference type="GO" id="GO:0042756">
    <property type="term" value="P:drinking behavior"/>
    <property type="evidence" value="ECO:0000314"/>
    <property type="project" value="UniProtKB"/>
</dbReference>
<dbReference type="GO" id="GO:0006887">
    <property type="term" value="P:exocytosis"/>
    <property type="evidence" value="ECO:0007669"/>
    <property type="project" value="UniProtKB-KW"/>
</dbReference>
<dbReference type="GO" id="GO:0036335">
    <property type="term" value="P:intestinal stem cell homeostasis"/>
    <property type="evidence" value="ECO:0000315"/>
    <property type="project" value="UniProtKB"/>
</dbReference>
<dbReference type="GO" id="GO:0007605">
    <property type="term" value="P:sensory perception of sound"/>
    <property type="evidence" value="ECO:0000315"/>
    <property type="project" value="UniProtKB"/>
</dbReference>
<dbReference type="GO" id="GO:0160069">
    <property type="term" value="P:surfactant secretion"/>
    <property type="evidence" value="ECO:0000315"/>
    <property type="project" value="UniProtKB"/>
</dbReference>
<dbReference type="InterPro" id="IPR045122">
    <property type="entry name" value="Csc1-like"/>
</dbReference>
<dbReference type="InterPro" id="IPR003864">
    <property type="entry name" value="CSC1/OSCA1-like_7TM"/>
</dbReference>
<dbReference type="InterPro" id="IPR027815">
    <property type="entry name" value="CSC1/OSCA1-like_cyt"/>
</dbReference>
<dbReference type="InterPro" id="IPR032880">
    <property type="entry name" value="Csc1/OSCA1-like_N"/>
</dbReference>
<dbReference type="PANTHER" id="PTHR13018:SF38">
    <property type="entry name" value="CSC1-LIKE PROTEIN 2"/>
    <property type="match status" value="1"/>
</dbReference>
<dbReference type="PANTHER" id="PTHR13018">
    <property type="entry name" value="PROBABLE MEMBRANE PROTEIN DUF221-RELATED"/>
    <property type="match status" value="1"/>
</dbReference>
<dbReference type="Pfam" id="PF14703">
    <property type="entry name" value="PHM7_cyt"/>
    <property type="match status" value="1"/>
</dbReference>
<dbReference type="Pfam" id="PF02714">
    <property type="entry name" value="RSN1_7TM"/>
    <property type="match status" value="1"/>
</dbReference>
<dbReference type="Pfam" id="PF13967">
    <property type="entry name" value="RSN1_TM"/>
    <property type="match status" value="1"/>
</dbReference>
<name>TM63B_MOUSE</name>
<protein>
    <recommendedName>
        <fullName evidence="21">Mechanosensitive cation channel TMEM63B</fullName>
    </recommendedName>
    <alternativeName>
        <fullName>Transmembrane protein 63B</fullName>
        <shortName evidence="20">mTMEM63B</shortName>
    </alternativeName>
</protein>
<proteinExistence type="evidence at protein level"/>
<accession>Q3TWI9</accession>
<accession>Q6PCL2</accession>
<accession>Q6PGA4</accession>
<accession>Q8C1V5</accession>
<accession>Q8R0W7</accession>
<feature type="chain" id="PRO_0000280729" description="Mechanosensitive cation channel TMEM63B">
    <location>
        <begin position="1"/>
        <end position="832"/>
    </location>
</feature>
<feature type="topological domain" description="Extracellular" evidence="22 24 25">
    <location>
        <begin position="1"/>
        <end position="40"/>
    </location>
</feature>
<feature type="transmembrane region" description="Helical; Name=TM0" evidence="22 24 25">
    <location>
        <begin position="41"/>
        <end position="65"/>
    </location>
</feature>
<feature type="topological domain" description="Cytoplasmic" evidence="22 24 25">
    <location>
        <begin position="66"/>
        <end position="145"/>
    </location>
</feature>
<feature type="transmembrane region" description="Helical; Name=TM1" evidence="22 24 25">
    <location>
        <begin position="146"/>
        <end position="178"/>
    </location>
</feature>
<feature type="topological domain" description="Extracellular" evidence="22 24 25">
    <location>
        <begin position="179"/>
        <end position="202"/>
    </location>
</feature>
<feature type="transmembrane region" description="Helical; Name=TM2" evidence="22 24 25">
    <location>
        <begin position="203"/>
        <end position="227"/>
    </location>
</feature>
<feature type="topological domain" description="Cytoplasmic" evidence="22 24 25">
    <location>
        <begin position="228"/>
        <end position="427"/>
    </location>
</feature>
<feature type="transmembrane region" description="Helical; Name=TM3" evidence="22 24 25">
    <location>
        <begin position="428"/>
        <end position="457"/>
    </location>
</feature>
<feature type="topological domain" description="Extracellular" evidence="22 24 25">
    <location>
        <begin position="458"/>
        <end position="472"/>
    </location>
</feature>
<feature type="transmembrane region" description="Helical; Name=TM4" evidence="22 24 25">
    <location>
        <begin position="473"/>
        <end position="502"/>
    </location>
</feature>
<feature type="topological domain" description="Cytoplasmic" evidence="22 24 25">
    <location>
        <begin position="503"/>
        <end position="506"/>
    </location>
</feature>
<feature type="transmembrane region" description="Helical; Name=TM5" evidence="22 24 25">
    <location>
        <begin position="507"/>
        <end position="543"/>
    </location>
</feature>
<feature type="topological domain" description="Extracellular" evidence="22 24 25">
    <location>
        <begin position="544"/>
        <end position="566"/>
    </location>
</feature>
<feature type="transmembrane region" description="Helical; Name=TM6" evidence="22 24 25">
    <location>
        <begin position="567"/>
        <end position="599"/>
    </location>
</feature>
<feature type="topological domain" description="Cytoplasmic" evidence="22 24 25">
    <location>
        <begin position="600"/>
        <end position="619"/>
    </location>
</feature>
<feature type="transmembrane region" description="Helical; Name=TM7" evidence="22 24 25">
    <location>
        <begin position="620"/>
        <end position="638"/>
    </location>
</feature>
<feature type="topological domain" description="Extracellular" evidence="22 24 25">
    <location>
        <begin position="639"/>
        <end position="641"/>
    </location>
</feature>
<feature type="transmembrane region" description="Helical; Name=TM8" evidence="22 24 25">
    <location>
        <begin position="642"/>
        <end position="666"/>
    </location>
</feature>
<feature type="topological domain" description="Cytoplasmic" evidence="22 24 25">
    <location>
        <begin position="667"/>
        <end position="673"/>
    </location>
</feature>
<feature type="transmembrane region" description="Helical; Name=TM9" evidence="22 24 25">
    <location>
        <begin position="674"/>
        <end position="702"/>
    </location>
</feature>
<feature type="topological domain" description="Extracellular" evidence="22 24 25">
    <location>
        <begin position="703"/>
        <end position="707"/>
    </location>
</feature>
<feature type="transmembrane region" description="Helical; Name=TM10" evidence="22 24 25">
    <location>
        <begin position="708"/>
        <end position="728"/>
    </location>
</feature>
<feature type="topological domain" description="Cytoplasmic" evidence="22 24 25">
    <location>
        <begin position="729"/>
        <end position="832"/>
    </location>
</feature>
<feature type="region of interest" description="Intracellular linker IL2; confers mechanosensitivity" evidence="1">
    <location>
        <begin position="231"/>
        <end position="426"/>
    </location>
</feature>
<feature type="region of interest" description="Gating helix" evidence="1">
    <location>
        <begin position="567"/>
        <end position="599"/>
    </location>
</feature>
<feature type="region of interest" description="Disordered" evidence="4">
    <location>
        <begin position="748"/>
        <end position="767"/>
    </location>
</feature>
<feature type="region of interest" description="Disordered" evidence="4">
    <location>
        <begin position="776"/>
        <end position="818"/>
    </location>
</feature>
<feature type="short sequence motif" description="Mediates endoplasmic reticulum retention" evidence="10">
    <location>
        <begin position="86"/>
        <end position="88"/>
    </location>
</feature>
<feature type="compositionally biased region" description="Polar residues" evidence="4">
    <location>
        <begin position="749"/>
        <end position="758"/>
    </location>
</feature>
<feature type="compositionally biased region" description="Low complexity" evidence="4">
    <location>
        <begin position="789"/>
        <end position="801"/>
    </location>
</feature>
<feature type="modified residue" description="Phosphoserine" evidence="26 27">
    <location>
        <position position="111"/>
    </location>
</feature>
<feature type="modified residue" description="Phosphoserine" evidence="27">
    <location>
        <position position="113"/>
    </location>
</feature>
<feature type="modified residue" description="Phosphoserine" evidence="26 27">
    <location>
        <position position="114"/>
    </location>
</feature>
<feature type="modified residue" description="Phosphoserine" evidence="26 27">
    <location>
        <position position="115"/>
    </location>
</feature>
<feature type="lipid moiety-binding region" description="S-palmitoyl cysteine" evidence="17">
    <location>
        <position position="51"/>
    </location>
</feature>
<feature type="lipid moiety-binding region" description="S-palmitoyl cysteine" evidence="17">
    <location>
        <position position="126"/>
    </location>
</feature>
<feature type="lipid moiety-binding region" description="S-palmitoyl cysteine" evidence="17">
    <location>
        <position position="382"/>
    </location>
</feature>
<feature type="lipid moiety-binding region" description="S-palmitoyl cysteine" evidence="17">
    <location>
        <position position="398"/>
    </location>
</feature>
<feature type="lipid moiety-binding region" description="S-palmitoyl cysteine" evidence="17">
    <location>
        <position position="726"/>
    </location>
</feature>
<feature type="lipid moiety-binding region" description="S-palmitoyl cysteine" evidence="17">
    <location>
        <position position="729"/>
    </location>
</feature>
<feature type="glycosylation site" description="N-linked (GlcNAc...) asparagine" evidence="3">
    <location>
        <position position="462"/>
    </location>
</feature>
<feature type="splice variant" id="VSP_062540" description="In isoform 2." evidence="9">
    <original>RLRRQERERVEQEY</original>
    <variation>S</variation>
    <location>
        <begin position="80"/>
        <end position="93"/>
    </location>
</feature>
<feature type="mutagenesis site" description="Does not significantly affect calcium influx induced by hypo-osmotic stress." evidence="13">
    <original>V</original>
    <variation>K</variation>
    <location>
        <position position="44"/>
    </location>
</feature>
<feature type="mutagenesis site" description="Decreased phospholipid scramblase activity without affecting localization to the plasma membrane." evidence="17">
    <original>D</original>
    <variation>A</variation>
    <location>
        <position position="48"/>
    </location>
</feature>
<feature type="mutagenesis site" description="Does not affect localization to the plasma membrane." evidence="10">
    <original>DRLRR</original>
    <variation>AAAA</variation>
    <location>
        <begin position="79"/>
        <end position="83"/>
    </location>
</feature>
<feature type="mutagenesis site" description="Increased localization to the plasma membrane." evidence="10">
    <original>RER</original>
    <variation>AAA</variation>
    <location>
        <begin position="86"/>
        <end position="88"/>
    </location>
</feature>
<feature type="mutagenesis site" description="Decreased palmitoylation, abolished localization to the plasma membrane; when associated with S-144." evidence="17">
    <original>C</original>
    <variation>S</variation>
    <location>
        <position position="126"/>
    </location>
</feature>
<feature type="mutagenesis site" description="Decreased palmitoylation, abolished localization to the plasma membrane; when associated with S-144." evidence="17">
    <original>C</original>
    <variation>S</variation>
    <location>
        <position position="144"/>
    </location>
</feature>
<feature type="mutagenesis site" description="In deltaCys-hook1 mutant; decreased palmitoylation, abolished localization to the plasma membrane." evidence="17">
    <original>CGHLCCCVVRGC</original>
    <variation>SGHLSSSVVRGS</variation>
    <location>
        <begin position="316"/>
        <end position="327"/>
    </location>
</feature>
<feature type="mutagenesis site" description="In deltaCys-hook2 mutant; decreased palmitoylation, abolished localization to the plasma membrane." evidence="17">
    <original>CKCQGCTCRGEPRASSC</original>
    <variation>SKSQGSTCRGEPRASSS</variation>
    <location>
        <begin position="382"/>
        <end position="398"/>
    </location>
</feature>
<feature type="mutagenesis site" description="Does not significantly affect calcium influx induced by hypo-osmotic stress." evidence="13">
    <original>Q</original>
    <variation>K</variation>
    <location>
        <position position="477"/>
    </location>
</feature>
<feature type="mutagenesis site" description="Decreased phospholipid scramblase activity without affecting localization to the plasma membrane." evidence="17">
    <original>W</original>
    <variation>A</variation>
    <location>
        <position position="485"/>
    </location>
</feature>
<feature type="mutagenesis site" description="Increases calcium influx induced by hypo-osmotic stress." evidence="13">
    <original>F</original>
    <variation>A</variation>
    <location>
        <position position="568"/>
    </location>
</feature>
<feature type="mutagenesis site" description="Increases calcium influx induced by hypo-osmotic stress." evidence="13">
    <original>F</original>
    <variation>A</variation>
    <location>
        <position position="569"/>
    </location>
</feature>
<feature type="mutagenesis site" description="Increases calcium influx induced by hypo-osmotic stress." evidence="13">
    <original>N</original>
    <variation>K</variation>
    <location>
        <position position="571"/>
    </location>
</feature>
<feature type="mutagenesis site" description="Decreases calcium influx induced by hypo-osmotic stress." evidence="13">
    <original>Y</original>
    <variation>A</variation>
    <location>
        <position position="572"/>
    </location>
</feature>
<feature type="mutagenesis site" description="Increases calcium influx induced by hypo-osmotic stress." evidence="13">
    <original>I</original>
    <variation>R</variation>
    <location>
        <position position="574"/>
    </location>
</feature>
<feature type="mutagenesis site" description="Increases calcium influx induced by hypo-osmotic stress." evidence="13">
    <original>A</original>
    <variation>K</variation>
    <location>
        <position position="575"/>
    </location>
</feature>
<feature type="mutagenesis site" description="Decreased localization to the plasma membrane." evidence="17">
    <original>D</original>
    <variation>A</variation>
    <location>
        <position position="584"/>
    </location>
</feature>
<feature type="mutagenesis site" description="Decreased phospholipid scramblase activity without affecting localization to the plasma membrane." evidence="17">
    <original>R</original>
    <variation>A</variation>
    <location>
        <position position="587"/>
    </location>
</feature>
<feature type="mutagenesis site" description="Decreased localization to the plasma membrane; constitutive phospholipid scramblase activity." evidence="17">
    <original>K</original>
    <variation>A</variation>
    <location>
        <position position="655"/>
    </location>
</feature>
<feature type="mutagenesis site" description="Decreased localization to the plasma membrane." evidence="17">
    <original>D</original>
    <variation>A</variation>
    <location>
        <position position="659"/>
    </location>
</feature>
<feature type="sequence conflict" description="In Ref. 1; BAC41131." evidence="21" ref="1">
    <original>Q</original>
    <variation>R</variation>
    <location>
        <position position="619"/>
    </location>
</feature>
<feature type="sequence conflict" description="In Ref. 2; AAH26370." evidence="21" ref="2">
    <original>L</original>
    <variation>P</variation>
    <location>
        <position position="725"/>
    </location>
</feature>
<feature type="sequence variant" description="In RNA edited version." evidence="9">
    <original>Q</original>
    <variation>R</variation>
    <location sequence="Q3TWI9-2">
        <position position="606"/>
    </location>
</feature>
<reference key="1">
    <citation type="journal article" date="2005" name="Science">
        <title>The transcriptional landscape of the mammalian genome.</title>
        <authorList>
            <person name="Carninci P."/>
            <person name="Kasukawa T."/>
            <person name="Katayama S."/>
            <person name="Gough J."/>
            <person name="Frith M.C."/>
            <person name="Maeda N."/>
            <person name="Oyama R."/>
            <person name="Ravasi T."/>
            <person name="Lenhard B."/>
            <person name="Wells C."/>
            <person name="Kodzius R."/>
            <person name="Shimokawa K."/>
            <person name="Bajic V.B."/>
            <person name="Brenner S.E."/>
            <person name="Batalov S."/>
            <person name="Forrest A.R."/>
            <person name="Zavolan M."/>
            <person name="Davis M.J."/>
            <person name="Wilming L.G."/>
            <person name="Aidinis V."/>
            <person name="Allen J.E."/>
            <person name="Ambesi-Impiombato A."/>
            <person name="Apweiler R."/>
            <person name="Aturaliya R.N."/>
            <person name="Bailey T.L."/>
            <person name="Bansal M."/>
            <person name="Baxter L."/>
            <person name="Beisel K.W."/>
            <person name="Bersano T."/>
            <person name="Bono H."/>
            <person name="Chalk A.M."/>
            <person name="Chiu K.P."/>
            <person name="Choudhary V."/>
            <person name="Christoffels A."/>
            <person name="Clutterbuck D.R."/>
            <person name="Crowe M.L."/>
            <person name="Dalla E."/>
            <person name="Dalrymple B.P."/>
            <person name="de Bono B."/>
            <person name="Della Gatta G."/>
            <person name="di Bernardo D."/>
            <person name="Down T."/>
            <person name="Engstrom P."/>
            <person name="Fagiolini M."/>
            <person name="Faulkner G."/>
            <person name="Fletcher C.F."/>
            <person name="Fukushima T."/>
            <person name="Furuno M."/>
            <person name="Futaki S."/>
            <person name="Gariboldi M."/>
            <person name="Georgii-Hemming P."/>
            <person name="Gingeras T.R."/>
            <person name="Gojobori T."/>
            <person name="Green R.E."/>
            <person name="Gustincich S."/>
            <person name="Harbers M."/>
            <person name="Hayashi Y."/>
            <person name="Hensch T.K."/>
            <person name="Hirokawa N."/>
            <person name="Hill D."/>
            <person name="Huminiecki L."/>
            <person name="Iacono M."/>
            <person name="Ikeo K."/>
            <person name="Iwama A."/>
            <person name="Ishikawa T."/>
            <person name="Jakt M."/>
            <person name="Kanapin A."/>
            <person name="Katoh M."/>
            <person name="Kawasawa Y."/>
            <person name="Kelso J."/>
            <person name="Kitamura H."/>
            <person name="Kitano H."/>
            <person name="Kollias G."/>
            <person name="Krishnan S.P."/>
            <person name="Kruger A."/>
            <person name="Kummerfeld S.K."/>
            <person name="Kurochkin I.V."/>
            <person name="Lareau L.F."/>
            <person name="Lazarevic D."/>
            <person name="Lipovich L."/>
            <person name="Liu J."/>
            <person name="Liuni S."/>
            <person name="McWilliam S."/>
            <person name="Madan Babu M."/>
            <person name="Madera M."/>
            <person name="Marchionni L."/>
            <person name="Matsuda H."/>
            <person name="Matsuzawa S."/>
            <person name="Miki H."/>
            <person name="Mignone F."/>
            <person name="Miyake S."/>
            <person name="Morris K."/>
            <person name="Mottagui-Tabar S."/>
            <person name="Mulder N."/>
            <person name="Nakano N."/>
            <person name="Nakauchi H."/>
            <person name="Ng P."/>
            <person name="Nilsson R."/>
            <person name="Nishiguchi S."/>
            <person name="Nishikawa S."/>
            <person name="Nori F."/>
            <person name="Ohara O."/>
            <person name="Okazaki Y."/>
            <person name="Orlando V."/>
            <person name="Pang K.C."/>
            <person name="Pavan W.J."/>
            <person name="Pavesi G."/>
            <person name="Pesole G."/>
            <person name="Petrovsky N."/>
            <person name="Piazza S."/>
            <person name="Reed J."/>
            <person name="Reid J.F."/>
            <person name="Ring B.Z."/>
            <person name="Ringwald M."/>
            <person name="Rost B."/>
            <person name="Ruan Y."/>
            <person name="Salzberg S.L."/>
            <person name="Sandelin A."/>
            <person name="Schneider C."/>
            <person name="Schoenbach C."/>
            <person name="Sekiguchi K."/>
            <person name="Semple C.A."/>
            <person name="Seno S."/>
            <person name="Sessa L."/>
            <person name="Sheng Y."/>
            <person name="Shibata Y."/>
            <person name="Shimada H."/>
            <person name="Shimada K."/>
            <person name="Silva D."/>
            <person name="Sinclair B."/>
            <person name="Sperling S."/>
            <person name="Stupka E."/>
            <person name="Sugiura K."/>
            <person name="Sultana R."/>
            <person name="Takenaka Y."/>
            <person name="Taki K."/>
            <person name="Tammoja K."/>
            <person name="Tan S.L."/>
            <person name="Tang S."/>
            <person name="Taylor M.S."/>
            <person name="Tegner J."/>
            <person name="Teichmann S.A."/>
            <person name="Ueda H.R."/>
            <person name="van Nimwegen E."/>
            <person name="Verardo R."/>
            <person name="Wei C.L."/>
            <person name="Yagi K."/>
            <person name="Yamanishi H."/>
            <person name="Zabarovsky E."/>
            <person name="Zhu S."/>
            <person name="Zimmer A."/>
            <person name="Hide W."/>
            <person name="Bult C."/>
            <person name="Grimmond S.M."/>
            <person name="Teasdale R.D."/>
            <person name="Liu E.T."/>
            <person name="Brusic V."/>
            <person name="Quackenbush J."/>
            <person name="Wahlestedt C."/>
            <person name="Mattick J.S."/>
            <person name="Hume D.A."/>
            <person name="Kai C."/>
            <person name="Sasaki D."/>
            <person name="Tomaru Y."/>
            <person name="Fukuda S."/>
            <person name="Kanamori-Katayama M."/>
            <person name="Suzuki M."/>
            <person name="Aoki J."/>
            <person name="Arakawa T."/>
            <person name="Iida J."/>
            <person name="Imamura K."/>
            <person name="Itoh M."/>
            <person name="Kato T."/>
            <person name="Kawaji H."/>
            <person name="Kawagashira N."/>
            <person name="Kawashima T."/>
            <person name="Kojima M."/>
            <person name="Kondo S."/>
            <person name="Konno H."/>
            <person name="Nakano K."/>
            <person name="Ninomiya N."/>
            <person name="Nishio T."/>
            <person name="Okada M."/>
            <person name="Plessy C."/>
            <person name="Shibata K."/>
            <person name="Shiraki T."/>
            <person name="Suzuki S."/>
            <person name="Tagami M."/>
            <person name="Waki K."/>
            <person name="Watahiki A."/>
            <person name="Okamura-Oho Y."/>
            <person name="Suzuki H."/>
            <person name="Kawai J."/>
            <person name="Hayashizaki Y."/>
        </authorList>
    </citation>
    <scope>NUCLEOTIDE SEQUENCE [LARGE SCALE MRNA]</scope>
    <source>
        <strain>C57BL/6J</strain>
        <tissue>Lung</tissue>
    </source>
</reference>
<reference key="2">
    <citation type="journal article" date="2004" name="Genome Res.">
        <title>The status, quality, and expansion of the NIH full-length cDNA project: the Mammalian Gene Collection (MGC).</title>
        <authorList>
            <consortium name="The MGC Project Team"/>
        </authorList>
    </citation>
    <scope>NUCLEOTIDE SEQUENCE [LARGE SCALE MRNA] OF 179-832</scope>
    <source>
        <strain>FVB/N</strain>
        <tissue>Liver</tissue>
        <tissue>Mammary tumor</tissue>
    </source>
</reference>
<reference key="3">
    <citation type="journal article" date="2007" name="Proc. Natl. Acad. Sci. U.S.A.">
        <title>Large-scale phosphorylation analysis of mouse liver.</title>
        <authorList>
            <person name="Villen J."/>
            <person name="Beausoleil S.A."/>
            <person name="Gerber S.A."/>
            <person name="Gygi S.P."/>
        </authorList>
    </citation>
    <scope>IDENTIFICATION BY MASS SPECTROMETRY [LARGE SCALE ANALYSIS]</scope>
    <source>
        <tissue>Liver</tissue>
    </source>
</reference>
<reference key="4">
    <citation type="journal article" date="2009" name="Immunity">
        <title>The phagosomal proteome in interferon-gamma-activated macrophages.</title>
        <authorList>
            <person name="Trost M."/>
            <person name="English L."/>
            <person name="Lemieux S."/>
            <person name="Courcelles M."/>
            <person name="Desjardins M."/>
            <person name="Thibault P."/>
        </authorList>
    </citation>
    <scope>PHOSPHORYLATION [LARGE SCALE ANALYSIS] AT SER-111; SER-114 AND SER-115</scope>
    <scope>IDENTIFICATION BY MASS SPECTROMETRY [LARGE SCALE ANALYSIS]</scope>
</reference>
<reference key="5">
    <citation type="journal article" date="2010" name="Cell">
        <title>A tissue-specific atlas of mouse protein phosphorylation and expression.</title>
        <authorList>
            <person name="Huttlin E.L."/>
            <person name="Jedrychowski M.P."/>
            <person name="Elias J.E."/>
            <person name="Goswami T."/>
            <person name="Rad R."/>
            <person name="Beausoleil S.A."/>
            <person name="Villen J."/>
            <person name="Haas W."/>
            <person name="Sowa M.E."/>
            <person name="Gygi S.P."/>
        </authorList>
    </citation>
    <scope>PHOSPHORYLATION [LARGE SCALE ANALYSIS] AT SER-111; SER-113; SER-114 AND SER-115</scope>
    <scope>IDENTIFICATION BY MASS SPECTROMETRY [LARGE SCALE ANALYSIS]</scope>
    <source>
        <tissue>Brain</tissue>
        <tissue>Brown adipose tissue</tissue>
        <tissue>Heart</tissue>
        <tissue>Kidney</tissue>
        <tissue>Lung</tissue>
        <tissue>Spleen</tissue>
    </source>
</reference>
<reference key="6">
    <citation type="journal article" date="2016" name="Cell Biochem. Funct.">
        <title>Co-expression of mouse TMEM63A, TMEM63B and TMEM63C confers hyperosmolarity activated ion currents in HEK293 cells.</title>
        <authorList>
            <person name="Zhao X."/>
            <person name="Yan X."/>
            <person name="Liu Y."/>
            <person name="Zhang P."/>
            <person name="Ni X."/>
        </authorList>
    </citation>
    <scope>FUNCTION</scope>
    <scope>SUBCELLULAR LOCATION</scope>
</reference>
<reference key="7">
    <citation type="journal article" date="2018" name="Elife">
        <title>OSCA/TMEM63 are an Evolutionarily Conserved Family of Mechanically Activated Ion Channels.</title>
        <authorList>
            <person name="Murthy S.E."/>
            <person name="Dubin A.E."/>
            <person name="Whitwam T."/>
            <person name="Jojoa-Cruz S."/>
            <person name="Cahalan S.M."/>
            <person name="Mousavi S.A.R."/>
            <person name="Ward A.B."/>
            <person name="Patapoutian A."/>
        </authorList>
    </citation>
    <scope>FUNCTION</scope>
</reference>
<reference key="8">
    <citation type="journal article" date="2019" name="Biochemistry">
        <title>Overexpression of Osmosensitive Ca2+-Permeable Channel TMEM63B Promotes Migration in HEK293T Cells.</title>
        <authorList>
            <person name="Marques M.C."/>
            <person name="Albuquerque I.S."/>
            <person name="Vaz S.H."/>
            <person name="Bernardes G.J.L."/>
        </authorList>
    </citation>
    <scope>FUNCTION</scope>
    <scope>TRANSPORTER ACTIVITY</scope>
    <scope>SUBCELLULAR LOCATION</scope>
</reference>
<reference key="9">
    <citation type="journal article" date="2020" name="J. Biol. Chem.">
        <title>Distant coupling between RNA editing and alternative splicing of the osmosensitive cation channel Tmem63b.</title>
        <authorList>
            <person name="Wu D."/>
            <person name="Zang Y.Y."/>
            <person name="Shi Y.Y."/>
            <person name="Ye C."/>
            <person name="Cai W.M."/>
            <person name="Tang X.H."/>
            <person name="Zhao L."/>
            <person name="Liu Y."/>
            <person name="Gan Z."/>
            <person name="Chen G.Q."/>
            <person name="Xu Y."/>
            <person name="Yang J.J."/>
            <person name="Shi Y.S."/>
        </authorList>
    </citation>
    <scope>ALTERNATIVE SPLICING (ISOFORM 2)</scope>
    <scope>FUNCTION (ISOFORM 2)</scope>
    <scope>TISSUE SPECIFICITY (ISOFORM 2)</scope>
    <scope>RNA EDITING (ISOFORM 2)</scope>
</reference>
<reference key="10">
    <citation type="journal article" date="2020" name="Cell Rep.">
        <title>The Cation Channel TMEM63B Is an Osmosensor Required for Hearing.</title>
        <authorList>
            <person name="Du H."/>
            <person name="Ye C."/>
            <person name="Wu D."/>
            <person name="Zang Y.Y."/>
            <person name="Zhang L."/>
            <person name="Chen C."/>
            <person name="He X.Y."/>
            <person name="Yang J.J."/>
            <person name="Hu P."/>
            <person name="Xu Z."/>
            <person name="Wan G."/>
            <person name="Shi Y.S."/>
        </authorList>
    </citation>
    <scope>FUNCTION</scope>
    <scope>TRANSPORTER ACTIVITY</scope>
    <scope>DISRUPTION PHENOTYPE</scope>
    <scope>SUBCELLULAR LOCATION</scope>
    <scope>TISSUE SPECIFICITY</scope>
</reference>
<reference key="11">
    <citation type="journal article" date="2023" name="J. Biol. Chem.">
        <title>A splicing-dependent ER retention signal regulates surface expression of the mechanosensitive TMEM63B cation channel.</title>
        <authorList>
            <person name="Wu D."/>
            <person name="Xu L."/>
            <person name="Cai W.M."/>
            <person name="Zhan S.Y."/>
            <person name="Wan G."/>
            <person name="Xu Y."/>
            <person name="Shi Y.S."/>
        </authorList>
    </citation>
    <scope>SUBCELLULAR LOCATION (ISOFORMS 1 AND 2)</scope>
    <scope>MOTIF</scope>
    <scope>MUTAGENESIS OF 79-ASP--ARG-83 AND 86-ARG--ARG-88</scope>
</reference>
<reference key="12">
    <citation type="journal article" date="2023" name="Nat. Commun.">
        <title>A mechanical-coupling mechanism in OSCA/TMEM63 channel mechanosensitivity.</title>
        <authorList>
            <person name="Zhang M."/>
            <person name="Shan Y."/>
            <person name="Cox C.D."/>
            <person name="Pei D."/>
        </authorList>
    </citation>
    <scope>SUBUNIT</scope>
</reference>
<reference key="13">
    <citation type="journal article" date="2023" name="Nat. Commun.">
        <title>Cryo-EM structure of TMEM63C suggests it functions as a monomer.</title>
        <authorList>
            <person name="Qin Y."/>
            <person name="Yu D."/>
            <person name="Wu D."/>
            <person name="Dong J."/>
            <person name="Li W.T."/>
            <person name="Ye C."/>
            <person name="Cheung K.C."/>
            <person name="Zhang Y."/>
            <person name="Xu Y."/>
            <person name="Wang Y."/>
            <person name="Shi Y.S."/>
            <person name="Dang S."/>
        </authorList>
    </citation>
    <scope>FUNCTION</scope>
    <scope>TRANSPORTER ACTIVITY</scope>
    <scope>MUTAGENESIS OF VAL-44; GLN-477; PHE-568; PHE-569; ASN-571; TYR-572; ILE-574 AND ALA-575</scope>
</reference>
<reference key="14">
    <citation type="journal article" date="2023" name="Neuron">
        <title>TMEM63 proteins function as monomeric high-threshold mechanosensitive ion channels.</title>
        <authorList>
            <person name="Zheng W."/>
            <person name="Rawson S."/>
            <person name="Shen Z."/>
            <person name="Tamilselvan E."/>
            <person name="Smith H.E."/>
            <person name="Halford J."/>
            <person name="Shen C."/>
            <person name="Murthy S.E."/>
            <person name="Ulbrich M.H."/>
            <person name="Sotomayor M."/>
            <person name="Fu T.M."/>
            <person name="Holt J.R."/>
        </authorList>
    </citation>
    <scope>FUNCTION</scope>
    <scope>SUBUNIT</scope>
    <scope>SUBCELLULAR LOCATION</scope>
</reference>
<reference key="15">
    <citation type="journal article" date="2024" name="Cell Discov.">
        <title>TMEM63B channel is the osmosensor required for thirst drive of interoceptive neurons.</title>
        <authorList>
            <person name="Yang G."/>
            <person name="Jia M."/>
            <person name="Li G."/>
            <person name="Zang Y.Y."/>
            <person name="Chen Y.Y."/>
            <person name="Wang Y.Y."/>
            <person name="Zhan S.Y."/>
            <person name="Peng S.X."/>
            <person name="Wan G."/>
            <person name="Li W."/>
            <person name="Yang J.J."/>
            <person name="Shi Y.S."/>
        </authorList>
    </citation>
    <scope>FUNCTION</scope>
    <scope>TISSUE SPECIFICITY</scope>
    <scope>DISRUPTION PHENOTYPE</scope>
</reference>
<reference key="16">
    <citation type="journal article" date="2024" name="Cells">
        <title>The TMEM63B Channel facilitates intestinal motility and enhances proliferation of intestinal stem cells.</title>
        <authorList>
            <person name="Tu J.J."/>
            <person name="Zang Y.Y."/>
            <person name="Shi Y.S."/>
            <person name="Teng X.Y."/>
        </authorList>
    </citation>
    <scope>FUNCTION</scope>
    <scope>DISRUPTION PHENOTYPE</scope>
    <scope>TISSUE SPECIFICITY</scope>
</reference>
<reference key="17">
    <citation type="journal article" date="2024" name="J. Clin. Invest.">
        <title>Mechanosensitive channels TMEM63A and TMEM63B mediate lung inflation-induced surfactant secretion.</title>
        <authorList>
            <person name="Chen G.L."/>
            <person name="Li J.Y."/>
            <person name="Chen X."/>
            <person name="Liu J.W."/>
            <person name="Zhang Q."/>
            <person name="Liu J.Y."/>
            <person name="Wen J."/>
            <person name="Wang N."/>
            <person name="Lei M."/>
            <person name="Wei J.P."/>
            <person name="Yi L."/>
            <person name="Li J.J."/>
            <person name="Ling Y.P."/>
            <person name="Yi H.Q."/>
            <person name="Hu Z."/>
            <person name="Duan J."/>
            <person name="Zhang J."/>
            <person name="Zeng B."/>
        </authorList>
    </citation>
    <scope>FUNCTION</scope>
    <scope>DISRUPTION PHENOTYPE</scope>
    <scope>SUBCELLULAR LOCATION</scope>
</reference>
<reference key="18">
    <citation type="journal article" date="2024" name="Nat. Commun.">
        <title>Phospholipid scrambling induced by an ion channel/metabolite transporter complex.</title>
        <authorList>
            <person name="Niu H."/>
            <person name="Maruoka M."/>
            <person name="Noguchi Y."/>
            <person name="Kosako H."/>
            <person name="Suzuki J."/>
        </authorList>
    </citation>
    <scope>FUNCTION</scope>
    <scope>TRANSPORTER ACTIVITY</scope>
    <scope>INTERACTION WITH SLC19A2</scope>
</reference>
<reference evidence="24 25" key="19">
    <citation type="journal article" date="2024" name="Nat. Struct. Mol. Biol.">
        <title>Membrane structure-responsive lipid scrambling by TMEM63B to control plasma membrane lipid distribution.</title>
        <authorList>
            <person name="Miyata Y."/>
            <person name="Takahashi K."/>
            <person name="Lee Y."/>
            <person name="Sultan C.S."/>
            <person name="Kuribayashi R."/>
            <person name="Takahashi M."/>
            <person name="Hata K."/>
            <person name="Bamba T."/>
            <person name="Izumi Y."/>
            <person name="Liu K."/>
            <person name="Uemura T."/>
            <person name="Nomura N."/>
            <person name="Iwata S."/>
            <person name="Nagata S."/>
            <person name="Nishizawa T."/>
            <person name="Segawa K."/>
        </authorList>
    </citation>
    <scope>STRUCTURE BY ELECTRON MICROSCOPY (3.40 ANGSTROMS)</scope>
    <scope>FUNCTION</scope>
    <scope>TRANSPORTER ACTIVITY</scope>
    <scope>SUBCELLULAR LOCATION</scope>
    <scope>PALMITOYLATION AT CYS-51; CYS-126; CYS-382; CYS-398; CYS-726 AND CYS-729</scope>
    <scope>MUTAGENESIS OF ASP-48; CYS-126; CYS-144; 316-CYS--CYS-327; 382-CYS--CYS-398; TRP-485; ASP-584; ARG-587; LYS-655 AND ASP-659</scope>
</reference>
<gene>
    <name evidence="19 23" type="primary">Tmem63b</name>
</gene>
<organism>
    <name type="scientific">Mus musculus</name>
    <name type="common">Mouse</name>
    <dbReference type="NCBI Taxonomy" id="10090"/>
    <lineage>
        <taxon>Eukaryota</taxon>
        <taxon>Metazoa</taxon>
        <taxon>Chordata</taxon>
        <taxon>Craniata</taxon>
        <taxon>Vertebrata</taxon>
        <taxon>Euteleostomi</taxon>
        <taxon>Mammalia</taxon>
        <taxon>Eutheria</taxon>
        <taxon>Euarchontoglires</taxon>
        <taxon>Glires</taxon>
        <taxon>Rodentia</taxon>
        <taxon>Myomorpha</taxon>
        <taxon>Muroidea</taxon>
        <taxon>Muridae</taxon>
        <taxon>Murinae</taxon>
        <taxon>Mus</taxon>
        <taxon>Mus</taxon>
    </lineage>
</organism>